<proteinExistence type="evidence at protein level"/>
<feature type="chain" id="PRO_0000105508" description="Protein jhp_1168">
    <location>
        <begin position="1"/>
        <end position="340"/>
    </location>
</feature>
<organism>
    <name type="scientific">Helicobacter pylori (strain J99 / ATCC 700824)</name>
    <name type="common">Campylobacter pylori J99</name>
    <dbReference type="NCBI Taxonomy" id="85963"/>
    <lineage>
        <taxon>Bacteria</taxon>
        <taxon>Pseudomonadati</taxon>
        <taxon>Campylobacterota</taxon>
        <taxon>Epsilonproteobacteria</taxon>
        <taxon>Campylobacterales</taxon>
        <taxon>Helicobacteraceae</taxon>
        <taxon>Helicobacter</taxon>
    </lineage>
</organism>
<accession>Q9ZJY0</accession>
<sequence length="340" mass="39544">MYRKDLDNYLKQRLPKAVFLYGEFDFFIHYYIQTISALFKGNNPDTETSLFYASDYEKSQIATLLEQDSLFGGSSLVILKLDFALHKKFKENDINPFLKALERPSHNRLIIGLYNAKSDTTKYKYTSEIIVKFFQKSPLKDEAICVRFFTPKAWESLKFLQERANFLHLDISGHLLNALFEINNEDLSVSFNDLDKLAVLNAPITLEDIQELSSNAGDMDLQKLILGLFLKKSVLDIYDYLLKEGKKDADILRGLERYFYQLFLFFAHIKTTGLMDAKEVLGYAPPKEIVENYAKNALRLKEAGYKRVFEIFRLWHLQSMQGQKELGFLYLTPIQKIINP</sequence>
<protein>
    <recommendedName>
        <fullName>Protein jhp_1168</fullName>
    </recommendedName>
</protein>
<dbReference type="EMBL" id="AE001439">
    <property type="protein sequence ID" value="AAD06742.1"/>
    <property type="molecule type" value="Genomic_DNA"/>
</dbReference>
<dbReference type="PIR" id="G71840">
    <property type="entry name" value="G71840"/>
</dbReference>
<dbReference type="RefSeq" id="WP_000285895.1">
    <property type="nucleotide sequence ID" value="NC_000921.1"/>
</dbReference>
<dbReference type="SMR" id="Q9ZJY0"/>
<dbReference type="KEGG" id="hpj:jhp_1168"/>
<dbReference type="PATRIC" id="fig|85963.30.peg.1404"/>
<dbReference type="eggNOG" id="COG1466">
    <property type="taxonomic scope" value="Bacteria"/>
</dbReference>
<dbReference type="Proteomes" id="UP000000804">
    <property type="component" value="Chromosome"/>
</dbReference>
<dbReference type="GO" id="GO:0009360">
    <property type="term" value="C:DNA polymerase III complex"/>
    <property type="evidence" value="ECO:0007669"/>
    <property type="project" value="TreeGrafter"/>
</dbReference>
<dbReference type="GO" id="GO:0003677">
    <property type="term" value="F:DNA binding"/>
    <property type="evidence" value="ECO:0007669"/>
    <property type="project" value="InterPro"/>
</dbReference>
<dbReference type="GO" id="GO:0003887">
    <property type="term" value="F:DNA-directed DNA polymerase activity"/>
    <property type="evidence" value="ECO:0007669"/>
    <property type="project" value="UniProtKB-KW"/>
</dbReference>
<dbReference type="GO" id="GO:0006261">
    <property type="term" value="P:DNA-templated DNA replication"/>
    <property type="evidence" value="ECO:0007669"/>
    <property type="project" value="TreeGrafter"/>
</dbReference>
<dbReference type="Gene3D" id="3.40.50.300">
    <property type="entry name" value="P-loop containing nucleotide triphosphate hydrolases"/>
    <property type="match status" value="1"/>
</dbReference>
<dbReference type="InterPro" id="IPR005790">
    <property type="entry name" value="DNA_polIII_delta"/>
</dbReference>
<dbReference type="InterPro" id="IPR027417">
    <property type="entry name" value="P-loop_NTPase"/>
</dbReference>
<dbReference type="NCBIfam" id="TIGR01128">
    <property type="entry name" value="holA"/>
    <property type="match status" value="1"/>
</dbReference>
<dbReference type="NCBIfam" id="NF006299">
    <property type="entry name" value="PRK08487.1-2"/>
    <property type="match status" value="1"/>
</dbReference>
<dbReference type="PANTHER" id="PTHR34388">
    <property type="entry name" value="DNA POLYMERASE III SUBUNIT DELTA"/>
    <property type="match status" value="1"/>
</dbReference>
<dbReference type="PANTHER" id="PTHR34388:SF1">
    <property type="entry name" value="DNA POLYMERASE III SUBUNIT DELTA"/>
    <property type="match status" value="1"/>
</dbReference>
<dbReference type="SUPFAM" id="SSF52540">
    <property type="entry name" value="P-loop containing nucleoside triphosphate hydrolases"/>
    <property type="match status" value="1"/>
</dbReference>
<comment type="function">
    <text>Could be the functional equivalent of DNA polymerase III delta subunit (HolA).</text>
</comment>
<comment type="subunit">
    <text>Seems to interact with H.pylori HolB.</text>
</comment>
<name>Y1168_HELPJ</name>
<keyword id="KW-0235">DNA replication</keyword>
<keyword id="KW-0239">DNA-directed DNA polymerase</keyword>
<keyword id="KW-0548">Nucleotidyltransferase</keyword>
<keyword id="KW-0808">Transferase</keyword>
<gene>
    <name type="ordered locus">jhp_1168</name>
</gene>
<reference key="1">
    <citation type="journal article" date="1999" name="Nature">
        <title>Genomic sequence comparison of two unrelated isolates of the human gastric pathogen Helicobacter pylori.</title>
        <authorList>
            <person name="Alm R.A."/>
            <person name="Ling L.-S.L."/>
            <person name="Moir D.T."/>
            <person name="King B.L."/>
            <person name="Brown E.D."/>
            <person name="Doig P.C."/>
            <person name="Smith D.R."/>
            <person name="Noonan B."/>
            <person name="Guild B.C."/>
            <person name="deJonge B.L."/>
            <person name="Carmel G."/>
            <person name="Tummino P.J."/>
            <person name="Caruso A."/>
            <person name="Uria-Nickelsen M."/>
            <person name="Mills D.M."/>
            <person name="Ives C."/>
            <person name="Gibson R."/>
            <person name="Merberg D."/>
            <person name="Mills S.D."/>
            <person name="Jiang Q."/>
            <person name="Taylor D.E."/>
            <person name="Vovis G.F."/>
            <person name="Trust T.J."/>
        </authorList>
    </citation>
    <scope>NUCLEOTIDE SEQUENCE [LARGE SCALE GENOMIC DNA]</scope>
    <source>
        <strain>J99 / ATCC 700824</strain>
    </source>
</reference>
<reference key="2">
    <citation type="unpublished observations" date="2000-04">
        <authorList>
            <person name="Legrain P."/>
        </authorList>
    </citation>
    <scope>INTERACTION</scope>
</reference>